<dbReference type="EMBL" id="AE000520">
    <property type="protein sequence ID" value="AAC65153.1"/>
    <property type="molecule type" value="Genomic_DNA"/>
</dbReference>
<dbReference type="PIR" id="G71359">
    <property type="entry name" value="G71359"/>
</dbReference>
<dbReference type="EnsemblBacteria" id="AAC65153">
    <property type="protein sequence ID" value="AAC65153"/>
    <property type="gene ID" value="TP_0161"/>
</dbReference>
<dbReference type="KEGG" id="tpa:TP_0161"/>
<dbReference type="HOGENOM" id="CLU_3405986_0_0_12"/>
<dbReference type="Proteomes" id="UP000000811">
    <property type="component" value="Chromosome"/>
</dbReference>
<gene>
    <name type="ordered locus">TP_0161</name>
</gene>
<reference key="1">
    <citation type="journal article" date="1998" name="Science">
        <title>Complete genome sequence of Treponema pallidum, the syphilis spirochete.</title>
        <authorList>
            <person name="Fraser C.M."/>
            <person name="Norris S.J."/>
            <person name="Weinstock G.M."/>
            <person name="White O."/>
            <person name="Sutton G.G."/>
            <person name="Dodson R.J."/>
            <person name="Gwinn M.L."/>
            <person name="Hickey E.K."/>
            <person name="Clayton R.A."/>
            <person name="Ketchum K.A."/>
            <person name="Sodergren E."/>
            <person name="Hardham J.M."/>
            <person name="McLeod M.P."/>
            <person name="Salzberg S.L."/>
            <person name="Peterson J.D."/>
            <person name="Khalak H.G."/>
            <person name="Richardson D.L."/>
            <person name="Howell J.K."/>
            <person name="Chidambaram M."/>
            <person name="Utterback T.R."/>
            <person name="McDonald L.A."/>
            <person name="Artiach P."/>
            <person name="Bowman C."/>
            <person name="Cotton M.D."/>
            <person name="Fujii C."/>
            <person name="Garland S.A."/>
            <person name="Hatch B."/>
            <person name="Horst K."/>
            <person name="Roberts K.M."/>
            <person name="Sandusky M."/>
            <person name="Weidman J.F."/>
            <person name="Smith H.O."/>
            <person name="Venter J.C."/>
        </authorList>
    </citation>
    <scope>NUCLEOTIDE SEQUENCE [LARGE SCALE GENOMIC DNA]</scope>
    <source>
        <strain>Nichols</strain>
    </source>
</reference>
<name>Y161_TREPA</name>
<sequence length="30" mass="3259">MSELSAAPLRPGKTQESEKGIYYAREGCVS</sequence>
<protein>
    <recommendedName>
        <fullName>Uncharacterized protein TP_0161</fullName>
    </recommendedName>
</protein>
<feature type="chain" id="PRO_0000202202" description="Uncharacterized protein TP_0161">
    <location>
        <begin position="1"/>
        <end position="30"/>
    </location>
</feature>
<keyword id="KW-1185">Reference proteome</keyword>
<proteinExistence type="predicted"/>
<accession>O83196</accession>
<organism>
    <name type="scientific">Treponema pallidum (strain Nichols)</name>
    <dbReference type="NCBI Taxonomy" id="243276"/>
    <lineage>
        <taxon>Bacteria</taxon>
        <taxon>Pseudomonadati</taxon>
        <taxon>Spirochaetota</taxon>
        <taxon>Spirochaetia</taxon>
        <taxon>Spirochaetales</taxon>
        <taxon>Treponemataceae</taxon>
        <taxon>Treponema</taxon>
    </lineage>
</organism>